<protein>
    <recommendedName>
        <fullName evidence="10">Hybrid PKS-NRPS synthetase apdA</fullName>
        <ecNumber evidence="7 8">2.3.1.-</ecNumber>
        <ecNumber evidence="7 8">6.3.2.-</ecNumber>
    </recommendedName>
    <alternativeName>
        <fullName evidence="10">Aspyridones biosynthesis protein A</fullName>
    </alternativeName>
</protein>
<organism>
    <name type="scientific">Emericella nidulans (strain FGSC A4 / ATCC 38163 / CBS 112.46 / NRRL 194 / M139)</name>
    <name type="common">Aspergillus nidulans</name>
    <dbReference type="NCBI Taxonomy" id="227321"/>
    <lineage>
        <taxon>Eukaryota</taxon>
        <taxon>Fungi</taxon>
        <taxon>Dikarya</taxon>
        <taxon>Ascomycota</taxon>
        <taxon>Pezizomycotina</taxon>
        <taxon>Eurotiomycetes</taxon>
        <taxon>Eurotiomycetidae</taxon>
        <taxon>Eurotiales</taxon>
        <taxon>Aspergillaceae</taxon>
        <taxon>Aspergillus</taxon>
        <taxon>Aspergillus subgen. Nidulantes</taxon>
    </lineage>
</organism>
<feature type="chain" id="PRO_0000438440" description="Hybrid PKS-NRPS synthetase apdA">
    <location>
        <begin position="1"/>
        <end position="3930"/>
    </location>
</feature>
<feature type="domain" description="Ketosynthase family 3 (KS3)" evidence="3 12">
    <location>
        <begin position="2"/>
        <end position="440"/>
    </location>
</feature>
<feature type="domain" description="PKS/mFAS DH" evidence="4">
    <location>
        <begin position="948"/>
        <end position="1252"/>
    </location>
</feature>
<feature type="domain" description="Carrier 1" evidence="2">
    <location>
        <begin position="2326"/>
        <end position="2403"/>
    </location>
</feature>
<feature type="domain" description="Carrier 2" evidence="2">
    <location>
        <begin position="3493"/>
        <end position="3572"/>
    </location>
</feature>
<feature type="region of interest" description="Malonyl-CoA:ACP transacylase (MAT) domain" evidence="1 12">
    <location>
        <begin position="557"/>
        <end position="879"/>
    </location>
</feature>
<feature type="region of interest" description="Dehydratase (DH) domain" evidence="1 12">
    <location>
        <begin position="948"/>
        <end position="1251"/>
    </location>
</feature>
<feature type="region of interest" description="N-terminal hotdog fold" evidence="4">
    <location>
        <begin position="948"/>
        <end position="1085"/>
    </location>
</feature>
<feature type="region of interest" description="C-terminal hotdog fold" evidence="4">
    <location>
        <begin position="1100"/>
        <end position="1252"/>
    </location>
</feature>
<feature type="region of interest" description="Methyltransferase (MT) domain" evidence="1 12">
    <location>
        <begin position="1389"/>
        <end position="1588"/>
    </location>
</feature>
<feature type="region of interest" description="Ketoreductase (KR) domain" evidence="1 12">
    <location>
        <begin position="2088"/>
        <end position="2229"/>
    </location>
</feature>
<feature type="region of interest" description="Disordered" evidence="5">
    <location>
        <begin position="2414"/>
        <end position="2433"/>
    </location>
</feature>
<feature type="region of interest" description="Disordered" evidence="5">
    <location>
        <begin position="2444"/>
        <end position="2494"/>
    </location>
</feature>
<feature type="region of interest" description="Condensation (C) domain" evidence="1 12">
    <location>
        <begin position="2509"/>
        <end position="2937"/>
    </location>
</feature>
<feature type="region of interest" description="Adenylation (A) (KR) domain" evidence="1 12">
    <location>
        <begin position="2971"/>
        <end position="3371"/>
    </location>
</feature>
<feature type="region of interest" description="Reductase (RED) domain" evidence="1 12">
    <location>
        <begin position="2971"/>
        <end position="3371"/>
    </location>
</feature>
<feature type="compositionally biased region" description="Low complexity" evidence="5">
    <location>
        <begin position="2445"/>
        <end position="2473"/>
    </location>
</feature>
<feature type="active site" description="For beta-ketoacyl synthase activity" evidence="3">
    <location>
        <position position="176"/>
    </location>
</feature>
<feature type="active site" description="For beta-ketoacyl synthase activity" evidence="3">
    <location>
        <position position="313"/>
    </location>
</feature>
<feature type="active site" description="For beta-ketoacyl synthase activity" evidence="3">
    <location>
        <position position="361"/>
    </location>
</feature>
<feature type="active site" description="Proton acceptor; for dehydratase activity" evidence="4">
    <location>
        <position position="980"/>
    </location>
</feature>
<feature type="active site" description="Proton donor; for dehydratase activity" evidence="4">
    <location>
        <position position="1159"/>
    </location>
</feature>
<feature type="modified residue" description="O-(pantetheine 4'-phosphoryl)serine" evidence="2">
    <location>
        <position position="2363"/>
    </location>
</feature>
<feature type="modified residue" description="O-(pantetheine 4'-phosphoryl)serine" evidence="2">
    <location>
        <position position="3532"/>
    </location>
</feature>
<sequence length="3930" mass="431297">MQDLIAIVGSACRFPGQSDSPSKLWTRLKEPIDLRKTFPPQRLNLARFYHPDGEHHGSTDVRGTSYLLSEDPRQFDASFFNINPREAEGMDPQQRLLLETAFEALEAAGYSLEAMNGSKTSVHVGVMNSDFSNIQLRDPEVLPTYNATGTAISILSNRLSYFFNLKGPSVTIDTACSSSLVALHQAVQGLRAGDATAAIVAGANLIFDPAMYIAESSLHMLSPDSCSRMWDKDANGYARGEGVGVLVLKPLSRAIMDGDHVEAVIRSTGVNSDGRTKGITMPNAESQTELIRQTYRDAGLDPIRDRCQYFECHGTGTATGDPIEARAVHDAFFPTETRTASNTLIPDGKLYVGSVKTIIGHLEGCAGIAGVLKAVLAIKNRTIPPNMHFHEPNPRVIPFCDRLEIPTVPIPWPDTGRSPLRASINSFGFGGTNAHAIIEGYDALSSPVREATITPDDLFIGPLLFSANSSSSLVANVKNMAERIRSDPSIDLESLVWTLYARRSVLPVKAFFTGGTVQRLLNFMDRFVAESEETTSSTAGIKYQPLNPTETPGILGIFTGQGAQWALMGFSLLQQNHVFRAAIERCQAALATLHDSPSWSLLDELVKGADESRIGEAALSQPLCTALQIGLVDMLHSAGIKLDAVVGHSSGEIAAVYAAGIINADAAIKIAYYRGYYAKLAAGARGQAGRMMATAMSFDEAEEFCAQPQWRGRLAAAASNSPQSVTLSGDIDAIEEALQLFEAEKKFARILRTDTAYHSHHMQPCAERYLKSLQACQIKVSPPRKDCVWISSVRGDTQLLEGDLSTLADQYWVDNMCNPVLFSQAVETSIWNGGPFDVAVELGPHPALKGPVEQTIKAVYGPIPAYAGLMRRGDNEIEAFSGGVGFVWSRLGPDYVDMSGYRKGFIGADRLRPQVLKDLPVYCWDHSKLYWKESRISRQYRLRQDTPHELLGRRVPDDSDDSRRWRNVLRLSELPWIRGHVFQGQVLFPGAGYVAMALEAARELTEGRPATLFEIENVSLRRALVISEQAGIETAFTARVIDAKEGRNDTNRLEADFACYFCSAEGNEPLVKACTGRLIINYGDPAAEALPQRTRLPSNNVPVDMGRFYDAMNSVGLDYQGIFRGLVHGKRSLGCSSVKAAWGEDMQIDNYVVNPGFLDVAFQSVYTAFSSPASGEIWAPYLPIHIERLAVNPNVSYRSAKDEVQMEADAFVTVSNSTLLKGDIQLYQIDSQHAAIQVEGISMKSMSEPQPENDRCLFSETVWGPDVSLGVSEVTSRATEDDTPLVEALDRVSLFYWQNLLQEVGAEEIAQFQWYHQRMFDAVRFQVSSVRSGQHPIAKPEWLEDDWETILAVSEPYASRVDMRLIHAVGENLASVVREDTQLLEVMVQDDMLNRFYMEGYGFSVINNAVSDALEQITFKYPHANILEIGAGTGGTTRSILDRIGSRYGSYTYTDISPAFFEAAAEKFEDAREKIQFKVLDVEKEVGAQGFDEHGYDVIVAANVLHATRKLEETMKNARALLKPGGYLVLMEITGPDVLRTQFIMGGLPGWWYGVDDGRVLSPAISAQQWNQLLLDTGFSGLDCLAPDMLDEYKHSFSLMVSQAIDEKIQMLRDPVLSKTLLPAADVLIIGGRTHSNVIHEIRRYLSAWTSRVEVWDRIQTKQLDQLAEFENIICLEELDQPLFSTTMTSETLLALQKVLSGTKNVVWAINSAKSQNPHVNMTVGLGRAMRTEVPGLNLLFVDIDAVENPIACAQLLSQMLLQLRTGSLTAAENTLWAAELEIRVQDGRRLIPRVLPMTQMNETYNASRRVISKPVDIETTCVKMEDSAGSLRLVPGACMVDGPVQRGHNRLRIHRSLPLAFGGGTPCYLCSGDLRENGLPALALSTSNANLADIPNDMVFALDQDQPCDAAMLEATGRQLLARDICNRLPASNRILVYQPSHDFAQALLLTGRHFSFVSADKASCFSDWVYIHSRASRRAIQSRLPKDFDALIDCTGELPENLIACLSRNCRVLNMTLHQLDGSLLGPAYSAALAHVSSSSIGPSIRVKDLPLATPSKLPMVDWTGVDTVELTLQPLSMRKLFSSSATYLLAGMTGDLGLSLCRWMIDNGARNIALTSRNPNVGEELLQDMRRSGADIRVFRNDITDQNAVRTLVENIRLSMPPIAGVFNACMVLRDGLFSEMDVDTLNDPLAPKVDGSKILDDIFQDDSLDFFVLFSSLASIIGNAANPTTTLQTCSSLVLPPTAARRVWQPSPHNSSRQHEIILGLEPFIDSPNATKRPPWEHNPMFSHYVSRPLLQETPAATTVEAAADVKQLLRSTVSGEAVIPIVQEAFARKLESMMQLPANSINLNVPLIDLGCDSLLAIEIRRWFIKELGIDVPVLKVLSGDTTAQICEDAVRQFLALQLEKQDTVAPNMTEKPETKSHPSSNATIIDNDALDKADAANGDYESSSQGDDSRGNSSSSSSHTSPSIQATTPDIKPNTPVPLDVDADPLGRGFQRTMIRAEPASFAQSRLWFLTQYLHDPTTYNVTVRYDVRGNLPASRIVSSLNRTICHHQSLQTCFFMDSDKETLMQGVLSPSYSSIKHIPSGSEQTVREEYNRLRSRVWDLQKGETFAVTVVSLSPEQHTIIFGYHHIVMDGVSWHLFLRDLDLAYRLRPLPSIEMEYIDWSKKQFQSAQRGDFTRPLEYWRKQHSPPPSVMPLLPMAQTSSRKPLTSYDSHVISVQIDRQLVSHIRLVSQSLGVTPFHFHLAVIQSILCRLLKTEDLCIGVVDANRTSEAHSGTVGFFLNLLPVRFTTREHSTFQDLVSSTKRTILGAISNSEAPFDLILEDLKVLRSIEHSPLFQVAVNYRMGAMLQVPLGDGTMEVAAADDAKNPYDLSFGITETSTGTCLLELTSQKQLYTEQSTELLLQMYMDVLRASSDNPSLPVNQLPVTLEPSTGKALAVAKGPRAEYSWPNTLWERYDAIRKSFPEETAIKDGKSELSYSQLTRSVEKLAAMLISQGVTAGDSVGVLLHPSIDAIACMLALLRVGCIYTPLDTRLPVARLSIIVNRSKSSLVLYHASTHDVALELGKFSKLANVEDMCESGQAQVPAIAPQSNPASFLFYTSGSTGTPKGILLSQQNFVNHLAAKTDKLNLGREVVLQQSSLGFDMSVVQTFCALGNGGTLVIAPKEARGDPIALSTIMAKERVTLTIATPSEYSLLLRFGLEQLQRPYSWRHACMGGEVVSRQLVQQFCQLDHPDLQLTNCYGPTEITAAATFQDISLQMKDQSTTDGSLVGKALPNYSVYIMDASSGSPVPIGVTGEICIGGAGVSLGYLNSLEQTDAKFVRDPFASPEDITRGWTKMYRTGDMGCLTEDGTLIFMGRMDGDNQVKLNGLRIELDEIANSILTTGNDLVSEAVVTVHSGSGSGSPLLVAHVVPLGDNVDNSRLQQLARDLPLPQYMLPSVVVSLDRLPINANGKVDRKAIMALPLPTQRTESAAGTGTDTARHLSLAEGELRLLWEKVLPASGGPSRLDADSDFFMRGGTSMLLVRLQGAIKESIGVSIPVAELYQFPTLGQMARRISRRKEDHQASHATVINWDSETALTQDLIYAAKNQFSTRQTKAHDRQDILLTGSTSFLGKNILQSLLHNPLVERVHCVAVPAEDIPRLPASEKISIYTGSLLTPSLGLTKTEIAVLQSSLDVIIHAGSTGHCLNNYSSLRASNVDSTKFLAAIALLCRIPIHFISSNRVTLLSGSTSLPPASVSSSLPNTDGSEGFTASKWASERLLESVANLASGLPVTIHRPCAVFGEEAPNEDALNALLKYSKLTRCVPRFENFEGYLDFEDVHRVAATIAADALSAESRESKSAARVRHHSSGHKVSMKDFKGRMETLFACPFKEVSMAEWTERALQAGIDPLITGYLEAMTMKGEIIRFPYMGEAGSL</sequence>
<keyword id="KW-0436">Ligase</keyword>
<keyword id="KW-0489">Methyltransferase</keyword>
<keyword id="KW-0511">Multifunctional enzyme</keyword>
<keyword id="KW-0560">Oxidoreductase</keyword>
<keyword id="KW-0596">Phosphopantetheine</keyword>
<keyword id="KW-0597">Phosphoprotein</keyword>
<keyword id="KW-1185">Reference proteome</keyword>
<keyword id="KW-0677">Repeat</keyword>
<keyword id="KW-0808">Transferase</keyword>
<proteinExistence type="evidence at protein level"/>
<name>APDA_EMENI</name>
<evidence type="ECO:0000255" key="1"/>
<evidence type="ECO:0000255" key="2">
    <source>
        <dbReference type="PROSITE-ProRule" id="PRU00258"/>
    </source>
</evidence>
<evidence type="ECO:0000255" key="3">
    <source>
        <dbReference type="PROSITE-ProRule" id="PRU01348"/>
    </source>
</evidence>
<evidence type="ECO:0000255" key="4">
    <source>
        <dbReference type="PROSITE-ProRule" id="PRU01363"/>
    </source>
</evidence>
<evidence type="ECO:0000256" key="5">
    <source>
        <dbReference type="SAM" id="MobiDB-lite"/>
    </source>
</evidence>
<evidence type="ECO:0000269" key="6">
    <source>
    </source>
</evidence>
<evidence type="ECO:0000269" key="7">
    <source>
    </source>
</evidence>
<evidence type="ECO:0000269" key="8">
    <source>
    </source>
</evidence>
<evidence type="ECO:0000269" key="9">
    <source ref="5"/>
</evidence>
<evidence type="ECO:0000303" key="10">
    <source>
    </source>
</evidence>
<evidence type="ECO:0000305" key="11"/>
<evidence type="ECO:0000305" key="12">
    <source>
    </source>
</evidence>
<evidence type="ECO:0000305" key="13">
    <source>
    </source>
</evidence>
<evidence type="ECO:0000305" key="14">
    <source ref="5"/>
</evidence>
<comment type="function">
    <text evidence="6 7 8 9 14">Hybrid PKS-NRPS synthetase; part of the gene cluster that mediates the biosynthesis of aspyridones (PubMed:17369821, PubMed:20828130, Ref.5). The polyketide-amino acid backbone preaspyridone A is first assembled by the PKS-NRPS hybrid apdA (PubMed:17369821, PubMed:20828130). The assembly of preaspyridone A is initiated by loading of malonyl-CoA onto apdA, followed by decarboxylation to yield the acetyl starter unit (PubMed:20828130). The growing polyketide chain then elongates into a tetraketide (PubMed:20828130). The adpA PKS module catalyzes three Claisen condensations, as well as beta-keto processing and methylation (PubMed:17369821, PubMed:20828130). Alpha-methylation step during polyketide synthesis is a prerequisite and a key checkpoint for chain transfer between PKS and NRPS modules (PubMed:25494235). The downstream NRPS module contains the condensation (C), adenylation (A), and thiolation (T) domains and catalyzes the incorporation of tyrosine via the formation of the L-tyrosinyl-thioester and the amide linkage between L-tyrosinyl-thioester and the tetraketide (PubMed:20828130). The bimodular assembly line is terminated with a reductase (R) domain that facilitates formation and release of the tetramic acid product (PubMed:20828130). Because apdA lacks a designated enoylreductase (ER) domain, the required activity is provided the enoyl reductase apdC (PubMed:17369821, PubMed:20828130, Ref.5). ApdC appears to operate with different stereoselectivity in different PKS cycle (Ref.5). Combined with apdC, apdA is proposed to synthesize preaspyridone A via about 20 enzymatic steps (PubMed:20828130). A number of oxidative steps performed successively by the cytochrome P450 monooxygenases apdE and apdB are required for the conversion of preaspyridone A to aspyridone A (PubMed:17369821). The cytochrome P450 monooxygenase apdE is responsible for the oxidative dephenylation of preaspyridone A (Ref.5). Finally, the predicted FAD-dependent monooxygenase apdD and the acyl-CoA dehydrogenase apdG may be involved in the transformation of aspyridone A into aspyridone B (Probable) (PubMed:17369821).</text>
</comment>
<comment type="pathway">
    <text evidence="6 7 9">Secondary metabolite biosynthesis.</text>
</comment>
<comment type="induction">
    <text evidence="6">Expression is positively regulated by the aspyridones cluster specific transcription regulator apdR (PubMed:17369821).</text>
</comment>
<comment type="domain">
    <text evidence="7 8 13">ApdA has the following domain architecture: KS-MAT-DH-MT-KR-ACP-C-A-T-R (Probable). The apdA PKS module (domains KS to ACP) is responsible for the biosynthesis of the polyketide chain and catalyzes three Claisen condensations, as well as beta-keto processing and methylation (PubMed:20828130, PubMed:25494235). The downstream NRPS module contains the condensation (C), adenylation (A), and thiolation (T) domains and catalyzes the formation of the L-tyrosinyl-thioester and the amide linkage between L-tyrosinyl-thioester and the tetraketide (PubMed:20828130, PubMed:25494235). The bimodular assembly line is terminated with a putative reductase (R) domain that facilitates formation and release of the tetramic acid product (PubMed:20828130, PubMed:25494235).</text>
</comment>
<comment type="similarity">
    <text evidence="11">In the C-terminal section; belongs to the NRP synthetase family.</text>
</comment>
<accession>Q5ATG8</accession>
<accession>C8VEB3</accession>
<reference key="1">
    <citation type="journal article" date="2005" name="Nature">
        <title>Sequencing of Aspergillus nidulans and comparative analysis with A. fumigatus and A. oryzae.</title>
        <authorList>
            <person name="Galagan J.E."/>
            <person name="Calvo S.E."/>
            <person name="Cuomo C."/>
            <person name="Ma L.-J."/>
            <person name="Wortman J.R."/>
            <person name="Batzoglou S."/>
            <person name="Lee S.-I."/>
            <person name="Bastuerkmen M."/>
            <person name="Spevak C.C."/>
            <person name="Clutterbuck J."/>
            <person name="Kapitonov V."/>
            <person name="Jurka J."/>
            <person name="Scazzocchio C."/>
            <person name="Farman M.L."/>
            <person name="Butler J."/>
            <person name="Purcell S."/>
            <person name="Harris S."/>
            <person name="Braus G.H."/>
            <person name="Draht O."/>
            <person name="Busch S."/>
            <person name="D'Enfert C."/>
            <person name="Bouchier C."/>
            <person name="Goldman G.H."/>
            <person name="Bell-Pedersen D."/>
            <person name="Griffiths-Jones S."/>
            <person name="Doonan J.H."/>
            <person name="Yu J."/>
            <person name="Vienken K."/>
            <person name="Pain A."/>
            <person name="Freitag M."/>
            <person name="Selker E.U."/>
            <person name="Archer D.B."/>
            <person name="Penalva M.A."/>
            <person name="Oakley B.R."/>
            <person name="Momany M."/>
            <person name="Tanaka T."/>
            <person name="Kumagai T."/>
            <person name="Asai K."/>
            <person name="Machida M."/>
            <person name="Nierman W.C."/>
            <person name="Denning D.W."/>
            <person name="Caddick M.X."/>
            <person name="Hynes M."/>
            <person name="Paoletti M."/>
            <person name="Fischer R."/>
            <person name="Miller B.L."/>
            <person name="Dyer P.S."/>
            <person name="Sachs M.S."/>
            <person name="Osmani S.A."/>
            <person name="Birren B.W."/>
        </authorList>
    </citation>
    <scope>NUCLEOTIDE SEQUENCE [LARGE SCALE GENOMIC DNA]</scope>
    <source>
        <strain>FGSC A4 / ATCC 38163 / CBS 112.46 / NRRL 194 / M139</strain>
    </source>
</reference>
<reference key="2">
    <citation type="journal article" date="2009" name="Fungal Genet. Biol.">
        <title>The 2008 update of the Aspergillus nidulans genome annotation: a community effort.</title>
        <authorList>
            <person name="Wortman J.R."/>
            <person name="Gilsenan J.M."/>
            <person name="Joardar V."/>
            <person name="Deegan J."/>
            <person name="Clutterbuck J."/>
            <person name="Andersen M.R."/>
            <person name="Archer D."/>
            <person name="Bencina M."/>
            <person name="Braus G."/>
            <person name="Coutinho P."/>
            <person name="von Dohren H."/>
            <person name="Doonan J."/>
            <person name="Driessen A.J."/>
            <person name="Durek P."/>
            <person name="Espeso E."/>
            <person name="Fekete E."/>
            <person name="Flipphi M."/>
            <person name="Estrada C.G."/>
            <person name="Geysens S."/>
            <person name="Goldman G."/>
            <person name="de Groot P.W."/>
            <person name="Hansen K."/>
            <person name="Harris S.D."/>
            <person name="Heinekamp T."/>
            <person name="Helmstaedt K."/>
            <person name="Henrissat B."/>
            <person name="Hofmann G."/>
            <person name="Homan T."/>
            <person name="Horio T."/>
            <person name="Horiuchi H."/>
            <person name="James S."/>
            <person name="Jones M."/>
            <person name="Karaffa L."/>
            <person name="Karanyi Z."/>
            <person name="Kato M."/>
            <person name="Keller N."/>
            <person name="Kelly D.E."/>
            <person name="Kiel J.A."/>
            <person name="Kim J.M."/>
            <person name="van der Klei I.J."/>
            <person name="Klis F.M."/>
            <person name="Kovalchuk A."/>
            <person name="Krasevec N."/>
            <person name="Kubicek C.P."/>
            <person name="Liu B."/>
            <person name="Maccabe A."/>
            <person name="Meyer V."/>
            <person name="Mirabito P."/>
            <person name="Miskei M."/>
            <person name="Mos M."/>
            <person name="Mullins J."/>
            <person name="Nelson D.R."/>
            <person name="Nielsen J."/>
            <person name="Oakley B.R."/>
            <person name="Osmani S.A."/>
            <person name="Pakula T."/>
            <person name="Paszewski A."/>
            <person name="Paulsen I."/>
            <person name="Pilsyk S."/>
            <person name="Pocsi I."/>
            <person name="Punt P.J."/>
            <person name="Ram A.F."/>
            <person name="Ren Q."/>
            <person name="Robellet X."/>
            <person name="Robson G."/>
            <person name="Seiboth B."/>
            <person name="van Solingen P."/>
            <person name="Specht T."/>
            <person name="Sun J."/>
            <person name="Taheri-Talesh N."/>
            <person name="Takeshita N."/>
            <person name="Ussery D."/>
            <person name="vanKuyk P.A."/>
            <person name="Visser H."/>
            <person name="van de Vondervoort P.J."/>
            <person name="de Vries R.P."/>
            <person name="Walton J."/>
            <person name="Xiang X."/>
            <person name="Xiong Y."/>
            <person name="Zeng A.P."/>
            <person name="Brandt B.W."/>
            <person name="Cornell M.J."/>
            <person name="van den Hondel C.A."/>
            <person name="Visser J."/>
            <person name="Oliver S.G."/>
            <person name="Turner G."/>
        </authorList>
    </citation>
    <scope>GENOME REANNOTATION</scope>
    <source>
        <strain>FGSC A4 / ATCC 38163 / CBS 112.46 / NRRL 194 / M139</strain>
    </source>
</reference>
<reference key="3">
    <citation type="journal article" date="2007" name="Nat. Chem. Biol.">
        <title>Genomics-driven discovery of PKS-NRPS hybrid metabolites from Aspergillus nidulans.</title>
        <authorList>
            <person name="Bergmann S."/>
            <person name="Schuemann J."/>
            <person name="Scherlach K."/>
            <person name="Lange C."/>
            <person name="Brakhage A.A."/>
            <person name="Hertweck C."/>
        </authorList>
    </citation>
    <scope>FUNCTION</scope>
    <scope>INDUCTION</scope>
    <scope>PATHWAY</scope>
</reference>
<reference key="4">
    <citation type="journal article" date="2010" name="J. Am. Chem. Soc.">
        <title>Analysis of intact and dissected fungal polyketide synthase-nonribosomal peptide synthetase in vitro and in Saccharomyces cerevisiae.</title>
        <authorList>
            <person name="Xu W."/>
            <person name="Cai X."/>
            <person name="Jung M.E."/>
            <person name="Tang Y."/>
        </authorList>
    </citation>
    <scope>FUNCTION</scope>
    <scope>DOMAIN</scope>
    <scope>CATALYTIC ACTIVITY</scope>
    <scope>PATHWAY</scope>
</reference>
<reference key="5">
    <citation type="journal article" date="2013" name="Chem. Sci.">
        <title>One pathway, many compounds: Heterologous expression of a fungal biosynthetic pathway reveals its intrinsic potential for diversity.</title>
        <authorList>
            <person name="Wasil Z."/>
            <person name="Pahirulzaman K.A.K."/>
            <person name="Butts C."/>
            <person name="Simpson T.J."/>
            <person name="Lazarus C.M."/>
            <person name="Cox R.J."/>
        </authorList>
    </citation>
    <scope>FUNCTION</scope>
    <scope>CATALYTIC ACTIVITY</scope>
    <scope>PATHWAY</scope>
</reference>
<reference key="6">
    <citation type="journal article" date="2014" name="Org. Lett.">
        <title>Methylation-dependent acyl transfer between polyketide synthase and nonribosomal peptide synthetase modules in fungal natural product biosynthesis.</title>
        <authorList>
            <person name="Zou Y."/>
            <person name="Xu W."/>
            <person name="Tsunematsu Y."/>
            <person name="Tang M."/>
            <person name="Watanabe K."/>
            <person name="Tang Y."/>
        </authorList>
    </citation>
    <scope>FUNCTION</scope>
    <scope>CATALYTIC ACTIVITY</scope>
    <scope>DOMAIN</scope>
    <scope>PATHWAY</scope>
</reference>
<gene>
    <name evidence="10" type="primary">apdA</name>
    <name type="ORF">AN8412</name>
</gene>
<dbReference type="EC" id="2.3.1.-" evidence="7 8"/>
<dbReference type="EC" id="6.3.2.-" evidence="7 8"/>
<dbReference type="EMBL" id="BN001305">
    <property type="protein sequence ID" value="CBF80487.1"/>
    <property type="molecule type" value="Genomic_DNA"/>
</dbReference>
<dbReference type="EMBL" id="AACD01000153">
    <property type="protein sequence ID" value="EAA67034.1"/>
    <property type="molecule type" value="Genomic_DNA"/>
</dbReference>
<dbReference type="RefSeq" id="XP_681681.1">
    <property type="nucleotide sequence ID" value="XM_676589.1"/>
</dbReference>
<dbReference type="SMR" id="Q5ATG8"/>
<dbReference type="STRING" id="227321.Q5ATG8"/>
<dbReference type="EnsemblFungi" id="CBF80487">
    <property type="protein sequence ID" value="CBF80487"/>
    <property type="gene ID" value="ANIA_08412"/>
</dbReference>
<dbReference type="KEGG" id="ani:ANIA_08412"/>
<dbReference type="VEuPathDB" id="FungiDB:AN8412"/>
<dbReference type="eggNOG" id="KOG1178">
    <property type="taxonomic scope" value="Eukaryota"/>
</dbReference>
<dbReference type="eggNOG" id="KOG1202">
    <property type="taxonomic scope" value="Eukaryota"/>
</dbReference>
<dbReference type="HOGENOM" id="CLU_000022_37_4_1"/>
<dbReference type="InParanoid" id="Q5ATG8"/>
<dbReference type="OMA" id="ETDVHHA"/>
<dbReference type="OrthoDB" id="329835at2759"/>
<dbReference type="Proteomes" id="UP000000560">
    <property type="component" value="Chromosome V"/>
</dbReference>
<dbReference type="GO" id="GO:0004315">
    <property type="term" value="F:3-oxoacyl-[acyl-carrier-protein] synthase activity"/>
    <property type="evidence" value="ECO:0007669"/>
    <property type="project" value="InterPro"/>
</dbReference>
<dbReference type="GO" id="GO:0004312">
    <property type="term" value="F:fatty acid synthase activity"/>
    <property type="evidence" value="ECO:0000318"/>
    <property type="project" value="GO_Central"/>
</dbReference>
<dbReference type="GO" id="GO:0016874">
    <property type="term" value="F:ligase activity"/>
    <property type="evidence" value="ECO:0007669"/>
    <property type="project" value="UniProtKB-KW"/>
</dbReference>
<dbReference type="GO" id="GO:0008168">
    <property type="term" value="F:methyltransferase activity"/>
    <property type="evidence" value="ECO:0007669"/>
    <property type="project" value="UniProtKB-KW"/>
</dbReference>
<dbReference type="GO" id="GO:0016491">
    <property type="term" value="F:oxidoreductase activity"/>
    <property type="evidence" value="ECO:0007669"/>
    <property type="project" value="UniProtKB-KW"/>
</dbReference>
<dbReference type="GO" id="GO:0031177">
    <property type="term" value="F:phosphopantetheine binding"/>
    <property type="evidence" value="ECO:0007669"/>
    <property type="project" value="InterPro"/>
</dbReference>
<dbReference type="GO" id="GO:0006633">
    <property type="term" value="P:fatty acid biosynthetic process"/>
    <property type="evidence" value="ECO:0000318"/>
    <property type="project" value="GO_Central"/>
</dbReference>
<dbReference type="GO" id="GO:0032259">
    <property type="term" value="P:methylation"/>
    <property type="evidence" value="ECO:0007669"/>
    <property type="project" value="UniProtKB-KW"/>
</dbReference>
<dbReference type="GO" id="GO:0019748">
    <property type="term" value="P:secondary metabolic process"/>
    <property type="evidence" value="ECO:0000303"/>
    <property type="project" value="AspGD"/>
</dbReference>
<dbReference type="GO" id="GO:0044550">
    <property type="term" value="P:secondary metabolite biosynthetic process"/>
    <property type="evidence" value="ECO:0000318"/>
    <property type="project" value="GO_Central"/>
</dbReference>
<dbReference type="GO" id="GO:0009403">
    <property type="term" value="P:toxin biosynthetic process"/>
    <property type="evidence" value="ECO:0007669"/>
    <property type="project" value="UniProtKB-ARBA"/>
</dbReference>
<dbReference type="CDD" id="cd05930">
    <property type="entry name" value="A_NRPS"/>
    <property type="match status" value="1"/>
</dbReference>
<dbReference type="CDD" id="cd02440">
    <property type="entry name" value="AdoMet_MTases"/>
    <property type="match status" value="1"/>
</dbReference>
<dbReference type="CDD" id="cd19532">
    <property type="entry name" value="C_PKS-NRPS"/>
    <property type="match status" value="1"/>
</dbReference>
<dbReference type="CDD" id="cd00833">
    <property type="entry name" value="PKS"/>
    <property type="match status" value="1"/>
</dbReference>
<dbReference type="Gene3D" id="3.30.300.30">
    <property type="match status" value="1"/>
</dbReference>
<dbReference type="Gene3D" id="3.40.47.10">
    <property type="match status" value="1"/>
</dbReference>
<dbReference type="Gene3D" id="1.10.1200.10">
    <property type="entry name" value="ACP-like"/>
    <property type="match status" value="2"/>
</dbReference>
<dbReference type="Gene3D" id="3.30.559.10">
    <property type="entry name" value="Chloramphenicol acetyltransferase-like domain"/>
    <property type="match status" value="1"/>
</dbReference>
<dbReference type="Gene3D" id="3.40.366.10">
    <property type="entry name" value="Malonyl-Coenzyme A Acyl Carrier Protein, domain 2"/>
    <property type="match status" value="1"/>
</dbReference>
<dbReference type="Gene3D" id="3.40.50.12780">
    <property type="entry name" value="N-terminal domain of ligase-like"/>
    <property type="match status" value="1"/>
</dbReference>
<dbReference type="Gene3D" id="3.40.50.720">
    <property type="entry name" value="NAD(P)-binding Rossmann-like Domain"/>
    <property type="match status" value="3"/>
</dbReference>
<dbReference type="Gene3D" id="3.30.559.30">
    <property type="entry name" value="Nonribosomal peptide synthetase, condensation domain"/>
    <property type="match status" value="1"/>
</dbReference>
<dbReference type="Gene3D" id="3.10.129.110">
    <property type="entry name" value="Polyketide synthase dehydratase"/>
    <property type="match status" value="1"/>
</dbReference>
<dbReference type="Gene3D" id="3.40.50.150">
    <property type="entry name" value="Vaccinia Virus protein VP39"/>
    <property type="match status" value="1"/>
</dbReference>
<dbReference type="InterPro" id="IPR010071">
    <property type="entry name" value="AA_adenyl_dom"/>
</dbReference>
<dbReference type="InterPro" id="IPR001227">
    <property type="entry name" value="Ac_transferase_dom_sf"/>
</dbReference>
<dbReference type="InterPro" id="IPR036736">
    <property type="entry name" value="ACP-like_sf"/>
</dbReference>
<dbReference type="InterPro" id="IPR014043">
    <property type="entry name" value="Acyl_transferase_dom"/>
</dbReference>
<dbReference type="InterPro" id="IPR016035">
    <property type="entry name" value="Acyl_Trfase/lysoPLipase"/>
</dbReference>
<dbReference type="InterPro" id="IPR045851">
    <property type="entry name" value="AMP-bd_C_sf"/>
</dbReference>
<dbReference type="InterPro" id="IPR020845">
    <property type="entry name" value="AMP-binding_CS"/>
</dbReference>
<dbReference type="InterPro" id="IPR000873">
    <property type="entry name" value="AMP-dep_synth/lig_dom"/>
</dbReference>
<dbReference type="InterPro" id="IPR042099">
    <property type="entry name" value="ANL_N_sf"/>
</dbReference>
<dbReference type="InterPro" id="IPR023213">
    <property type="entry name" value="CAT-like_dom_sf"/>
</dbReference>
<dbReference type="InterPro" id="IPR001242">
    <property type="entry name" value="Condensatn"/>
</dbReference>
<dbReference type="InterPro" id="IPR013120">
    <property type="entry name" value="Far_NAD-bd"/>
</dbReference>
<dbReference type="InterPro" id="IPR018201">
    <property type="entry name" value="Ketoacyl_synth_AS"/>
</dbReference>
<dbReference type="InterPro" id="IPR014031">
    <property type="entry name" value="Ketoacyl_synth_C"/>
</dbReference>
<dbReference type="InterPro" id="IPR014030">
    <property type="entry name" value="Ketoacyl_synth_N"/>
</dbReference>
<dbReference type="InterPro" id="IPR016036">
    <property type="entry name" value="Malonyl_transacylase_ACP-bd"/>
</dbReference>
<dbReference type="InterPro" id="IPR013217">
    <property type="entry name" value="Methyltransf_12"/>
</dbReference>
<dbReference type="InterPro" id="IPR036291">
    <property type="entry name" value="NAD(P)-bd_dom_sf"/>
</dbReference>
<dbReference type="InterPro" id="IPR032821">
    <property type="entry name" value="PKS_assoc"/>
</dbReference>
<dbReference type="InterPro" id="IPR020841">
    <property type="entry name" value="PKS_Beta-ketoAc_synthase_dom"/>
</dbReference>
<dbReference type="InterPro" id="IPR042104">
    <property type="entry name" value="PKS_dehydratase_sf"/>
</dbReference>
<dbReference type="InterPro" id="IPR020807">
    <property type="entry name" value="PKS_DH"/>
</dbReference>
<dbReference type="InterPro" id="IPR049551">
    <property type="entry name" value="PKS_DH_C"/>
</dbReference>
<dbReference type="InterPro" id="IPR049552">
    <property type="entry name" value="PKS_DH_N"/>
</dbReference>
<dbReference type="InterPro" id="IPR013968">
    <property type="entry name" value="PKS_KR"/>
</dbReference>
<dbReference type="InterPro" id="IPR049900">
    <property type="entry name" value="PKS_mFAS_DH"/>
</dbReference>
<dbReference type="InterPro" id="IPR050091">
    <property type="entry name" value="PKS_NRPS_Biosynth_Enz"/>
</dbReference>
<dbReference type="InterPro" id="IPR020806">
    <property type="entry name" value="PKS_PP-bd"/>
</dbReference>
<dbReference type="InterPro" id="IPR009081">
    <property type="entry name" value="PP-bd_ACP"/>
</dbReference>
<dbReference type="InterPro" id="IPR029063">
    <property type="entry name" value="SAM-dependent_MTases_sf"/>
</dbReference>
<dbReference type="InterPro" id="IPR016039">
    <property type="entry name" value="Thiolase-like"/>
</dbReference>
<dbReference type="NCBIfam" id="TIGR01733">
    <property type="entry name" value="AA-adenyl-dom"/>
    <property type="match status" value="1"/>
</dbReference>
<dbReference type="PANTHER" id="PTHR43775">
    <property type="entry name" value="FATTY ACID SYNTHASE"/>
    <property type="match status" value="1"/>
</dbReference>
<dbReference type="PANTHER" id="PTHR43775:SF20">
    <property type="entry name" value="HYBRID PKS-NRPS SYNTHETASE APDA"/>
    <property type="match status" value="1"/>
</dbReference>
<dbReference type="Pfam" id="PF00698">
    <property type="entry name" value="Acyl_transf_1"/>
    <property type="match status" value="1"/>
</dbReference>
<dbReference type="Pfam" id="PF00501">
    <property type="entry name" value="AMP-binding"/>
    <property type="match status" value="1"/>
</dbReference>
<dbReference type="Pfam" id="PF00668">
    <property type="entry name" value="Condensation"/>
    <property type="match status" value="1"/>
</dbReference>
<dbReference type="Pfam" id="PF16197">
    <property type="entry name" value="KAsynt_C_assoc"/>
    <property type="match status" value="1"/>
</dbReference>
<dbReference type="Pfam" id="PF00109">
    <property type="entry name" value="ketoacyl-synt"/>
    <property type="match status" value="1"/>
</dbReference>
<dbReference type="Pfam" id="PF02801">
    <property type="entry name" value="Ketoacyl-synt_C"/>
    <property type="match status" value="1"/>
</dbReference>
<dbReference type="Pfam" id="PF08659">
    <property type="entry name" value="KR"/>
    <property type="match status" value="1"/>
</dbReference>
<dbReference type="Pfam" id="PF08242">
    <property type="entry name" value="Methyltransf_12"/>
    <property type="match status" value="1"/>
</dbReference>
<dbReference type="Pfam" id="PF07993">
    <property type="entry name" value="NAD_binding_4"/>
    <property type="match status" value="1"/>
</dbReference>
<dbReference type="Pfam" id="PF21089">
    <property type="entry name" value="PKS_DH_N"/>
    <property type="match status" value="1"/>
</dbReference>
<dbReference type="Pfam" id="PF00550">
    <property type="entry name" value="PP-binding"/>
    <property type="match status" value="2"/>
</dbReference>
<dbReference type="Pfam" id="PF14765">
    <property type="entry name" value="PS-DH"/>
    <property type="match status" value="1"/>
</dbReference>
<dbReference type="SMART" id="SM00827">
    <property type="entry name" value="PKS_AT"/>
    <property type="match status" value="1"/>
</dbReference>
<dbReference type="SMART" id="SM00826">
    <property type="entry name" value="PKS_DH"/>
    <property type="match status" value="1"/>
</dbReference>
<dbReference type="SMART" id="SM00822">
    <property type="entry name" value="PKS_KR"/>
    <property type="match status" value="1"/>
</dbReference>
<dbReference type="SMART" id="SM00825">
    <property type="entry name" value="PKS_KS"/>
    <property type="match status" value="1"/>
</dbReference>
<dbReference type="SMART" id="SM00823">
    <property type="entry name" value="PKS_PP"/>
    <property type="match status" value="2"/>
</dbReference>
<dbReference type="SUPFAM" id="SSF56801">
    <property type="entry name" value="Acetyl-CoA synthetase-like"/>
    <property type="match status" value="1"/>
</dbReference>
<dbReference type="SUPFAM" id="SSF47336">
    <property type="entry name" value="ACP-like"/>
    <property type="match status" value="2"/>
</dbReference>
<dbReference type="SUPFAM" id="SSF52777">
    <property type="entry name" value="CoA-dependent acyltransferases"/>
    <property type="match status" value="2"/>
</dbReference>
<dbReference type="SUPFAM" id="SSF52151">
    <property type="entry name" value="FabD/lysophospholipase-like"/>
    <property type="match status" value="1"/>
</dbReference>
<dbReference type="SUPFAM" id="SSF51735">
    <property type="entry name" value="NAD(P)-binding Rossmann-fold domains"/>
    <property type="match status" value="2"/>
</dbReference>
<dbReference type="SUPFAM" id="SSF55048">
    <property type="entry name" value="Probable ACP-binding domain of malonyl-CoA ACP transacylase"/>
    <property type="match status" value="1"/>
</dbReference>
<dbReference type="SUPFAM" id="SSF53335">
    <property type="entry name" value="S-adenosyl-L-methionine-dependent methyltransferases"/>
    <property type="match status" value="1"/>
</dbReference>
<dbReference type="SUPFAM" id="SSF53901">
    <property type="entry name" value="Thiolase-like"/>
    <property type="match status" value="1"/>
</dbReference>
<dbReference type="PROSITE" id="PS00455">
    <property type="entry name" value="AMP_BINDING"/>
    <property type="match status" value="1"/>
</dbReference>
<dbReference type="PROSITE" id="PS50075">
    <property type="entry name" value="CARRIER"/>
    <property type="match status" value="2"/>
</dbReference>
<dbReference type="PROSITE" id="PS00606">
    <property type="entry name" value="KS3_1"/>
    <property type="match status" value="1"/>
</dbReference>
<dbReference type="PROSITE" id="PS52004">
    <property type="entry name" value="KS3_2"/>
    <property type="match status" value="1"/>
</dbReference>
<dbReference type="PROSITE" id="PS52019">
    <property type="entry name" value="PKS_MFAS_DH"/>
    <property type="match status" value="1"/>
</dbReference>